<sequence length="264" mass="29246">MTMEILLVNDDGIYSNGLLALKNVISEEFDANVTVVAPTNQQSGIGRAISLFEPLRITKTKLADCSEGYAVSGTPTDCVVLGVHQVLKKVPDYVISGINIGENLGTELTTSGTLGAAFEGAHHGAKALACSLQVTTDHLKFKEGESPIDFMTTARIVRNVFKKFLDDEFPCDVININVPDNATENTPVEITKLARKMYSMHVEERIDPRSRSYYWLDGYPIMDEEDGTDVYAVRNKRNVSVTPLTLDNTAKNLDEFREKYAKKF</sequence>
<keyword id="KW-0963">Cytoplasm</keyword>
<keyword id="KW-0378">Hydrolase</keyword>
<keyword id="KW-0479">Metal-binding</keyword>
<keyword id="KW-0547">Nucleotide-binding</keyword>
<feature type="chain" id="PRO_1000092017" description="5'-nucleotidase SurE">
    <location>
        <begin position="1"/>
        <end position="264"/>
    </location>
</feature>
<feature type="binding site" evidence="1">
    <location>
        <position position="10"/>
    </location>
    <ligand>
        <name>a divalent metal cation</name>
        <dbReference type="ChEBI" id="CHEBI:60240"/>
    </ligand>
</feature>
<feature type="binding site" evidence="1">
    <location>
        <position position="11"/>
    </location>
    <ligand>
        <name>a divalent metal cation</name>
        <dbReference type="ChEBI" id="CHEBI:60240"/>
    </ligand>
</feature>
<feature type="binding site" evidence="1">
    <location>
        <position position="43"/>
    </location>
    <ligand>
        <name>a divalent metal cation</name>
        <dbReference type="ChEBI" id="CHEBI:60240"/>
    </ligand>
</feature>
<feature type="binding site" evidence="1">
    <location>
        <position position="99"/>
    </location>
    <ligand>
        <name>a divalent metal cation</name>
        <dbReference type="ChEBI" id="CHEBI:60240"/>
    </ligand>
</feature>
<protein>
    <recommendedName>
        <fullName evidence="1">5'-nucleotidase SurE</fullName>
        <ecNumber evidence="1">3.1.3.5</ecNumber>
    </recommendedName>
    <alternativeName>
        <fullName evidence="1">Nucleoside 5'-monophosphate phosphohydrolase</fullName>
    </alternativeName>
</protein>
<reference key="1">
    <citation type="submission" date="2007-10" db="EMBL/GenBank/DDBJ databases">
        <title>Complete sequence of Methanococcus maripaludis C6.</title>
        <authorList>
            <consortium name="US DOE Joint Genome Institute"/>
            <person name="Copeland A."/>
            <person name="Lucas S."/>
            <person name="Lapidus A."/>
            <person name="Barry K."/>
            <person name="Glavina del Rio T."/>
            <person name="Dalin E."/>
            <person name="Tice H."/>
            <person name="Pitluck S."/>
            <person name="Clum A."/>
            <person name="Schmutz J."/>
            <person name="Larimer F."/>
            <person name="Land M."/>
            <person name="Hauser L."/>
            <person name="Kyrpides N."/>
            <person name="Mikhailova N."/>
            <person name="Sieprawska-Lupa M."/>
            <person name="Whitman W.B."/>
            <person name="Richardson P."/>
        </authorList>
    </citation>
    <scope>NUCLEOTIDE SEQUENCE [LARGE SCALE GENOMIC DNA]</scope>
    <source>
        <strain>C6 / ATCC BAA-1332</strain>
    </source>
</reference>
<name>SURE_METM6</name>
<comment type="function">
    <text evidence="1">Nucleotidase that shows phosphatase activity on nucleoside 5'-monophosphates.</text>
</comment>
<comment type="catalytic activity">
    <reaction evidence="1">
        <text>a ribonucleoside 5'-phosphate + H2O = a ribonucleoside + phosphate</text>
        <dbReference type="Rhea" id="RHEA:12484"/>
        <dbReference type="ChEBI" id="CHEBI:15377"/>
        <dbReference type="ChEBI" id="CHEBI:18254"/>
        <dbReference type="ChEBI" id="CHEBI:43474"/>
        <dbReference type="ChEBI" id="CHEBI:58043"/>
        <dbReference type="EC" id="3.1.3.5"/>
    </reaction>
</comment>
<comment type="cofactor">
    <cofactor evidence="1">
        <name>a divalent metal cation</name>
        <dbReference type="ChEBI" id="CHEBI:60240"/>
    </cofactor>
    <text evidence="1">Binds 1 divalent metal cation per subunit.</text>
</comment>
<comment type="subcellular location">
    <subcellularLocation>
        <location evidence="1">Cytoplasm</location>
    </subcellularLocation>
</comment>
<comment type="similarity">
    <text evidence="1">Belongs to the SurE nucleotidase family.</text>
</comment>
<organism>
    <name type="scientific">Methanococcus maripaludis (strain C6 / ATCC BAA-1332)</name>
    <dbReference type="NCBI Taxonomy" id="444158"/>
    <lineage>
        <taxon>Archaea</taxon>
        <taxon>Methanobacteriati</taxon>
        <taxon>Methanobacteriota</taxon>
        <taxon>Methanomada group</taxon>
        <taxon>Methanococci</taxon>
        <taxon>Methanococcales</taxon>
        <taxon>Methanococcaceae</taxon>
        <taxon>Methanococcus</taxon>
    </lineage>
</organism>
<dbReference type="EC" id="3.1.3.5" evidence="1"/>
<dbReference type="EMBL" id="CP000867">
    <property type="protein sequence ID" value="ABX02419.1"/>
    <property type="molecule type" value="Genomic_DNA"/>
</dbReference>
<dbReference type="SMR" id="A9AAP6"/>
<dbReference type="STRING" id="444158.MmarC6_1607"/>
<dbReference type="KEGG" id="mmx:MmarC6_1607"/>
<dbReference type="eggNOG" id="arCOG02303">
    <property type="taxonomic scope" value="Archaea"/>
</dbReference>
<dbReference type="HOGENOM" id="CLU_045192_1_3_2"/>
<dbReference type="OrthoDB" id="26873at2157"/>
<dbReference type="PhylomeDB" id="A9AAP6"/>
<dbReference type="GO" id="GO:0005737">
    <property type="term" value="C:cytoplasm"/>
    <property type="evidence" value="ECO:0007669"/>
    <property type="project" value="UniProtKB-SubCell"/>
</dbReference>
<dbReference type="GO" id="GO:0008253">
    <property type="term" value="F:5'-nucleotidase activity"/>
    <property type="evidence" value="ECO:0007669"/>
    <property type="project" value="UniProtKB-UniRule"/>
</dbReference>
<dbReference type="GO" id="GO:0046872">
    <property type="term" value="F:metal ion binding"/>
    <property type="evidence" value="ECO:0007669"/>
    <property type="project" value="UniProtKB-UniRule"/>
</dbReference>
<dbReference type="GO" id="GO:0000166">
    <property type="term" value="F:nucleotide binding"/>
    <property type="evidence" value="ECO:0007669"/>
    <property type="project" value="UniProtKB-KW"/>
</dbReference>
<dbReference type="Gene3D" id="3.40.1210.10">
    <property type="entry name" value="Survival protein SurE-like phosphatase/nucleotidase"/>
    <property type="match status" value="1"/>
</dbReference>
<dbReference type="HAMAP" id="MF_00060">
    <property type="entry name" value="SurE"/>
    <property type="match status" value="1"/>
</dbReference>
<dbReference type="InterPro" id="IPR030048">
    <property type="entry name" value="SurE"/>
</dbReference>
<dbReference type="InterPro" id="IPR002828">
    <property type="entry name" value="SurE-like_Pase/nucleotidase"/>
</dbReference>
<dbReference type="InterPro" id="IPR036523">
    <property type="entry name" value="SurE-like_sf"/>
</dbReference>
<dbReference type="NCBIfam" id="NF001491">
    <property type="entry name" value="PRK00346.2-1"/>
    <property type="match status" value="1"/>
</dbReference>
<dbReference type="NCBIfam" id="TIGR00087">
    <property type="entry name" value="surE"/>
    <property type="match status" value="1"/>
</dbReference>
<dbReference type="PANTHER" id="PTHR30457">
    <property type="entry name" value="5'-NUCLEOTIDASE SURE"/>
    <property type="match status" value="1"/>
</dbReference>
<dbReference type="PANTHER" id="PTHR30457:SF0">
    <property type="entry name" value="PHOSPHATASE, PUTATIVE (AFU_ORTHOLOGUE AFUA_4G01070)-RELATED"/>
    <property type="match status" value="1"/>
</dbReference>
<dbReference type="Pfam" id="PF01975">
    <property type="entry name" value="SurE"/>
    <property type="match status" value="1"/>
</dbReference>
<dbReference type="SUPFAM" id="SSF64167">
    <property type="entry name" value="SurE-like"/>
    <property type="match status" value="1"/>
</dbReference>
<gene>
    <name evidence="1" type="primary">surE</name>
    <name type="ordered locus">MmarC6_1607</name>
</gene>
<accession>A9AAP6</accession>
<proteinExistence type="inferred from homology"/>
<evidence type="ECO:0000255" key="1">
    <source>
        <dbReference type="HAMAP-Rule" id="MF_00060"/>
    </source>
</evidence>